<feature type="chain" id="PRO_0000246119" description="Probable Fe(2+)-trafficking protein">
    <location>
        <begin position="1"/>
        <end position="90"/>
    </location>
</feature>
<gene>
    <name type="ordered locus">SG2036</name>
</gene>
<keyword id="KW-0408">Iron</keyword>
<organism>
    <name type="scientific">Sodalis glossinidius (strain morsitans)</name>
    <dbReference type="NCBI Taxonomy" id="343509"/>
    <lineage>
        <taxon>Bacteria</taxon>
        <taxon>Pseudomonadati</taxon>
        <taxon>Pseudomonadota</taxon>
        <taxon>Gammaproteobacteria</taxon>
        <taxon>Enterobacterales</taxon>
        <taxon>Bruguierivoracaceae</taxon>
        <taxon>Sodalis</taxon>
    </lineage>
</organism>
<sequence length="90" mass="10701">MSRTIYCTFLKREAEGQDFQFYPGELGKRIYDNISKEAWTQWQTKQTMLINEKKISMMNVADRKVLEQEMINFLFEGQDVHIQGYTPPSE</sequence>
<reference key="1">
    <citation type="journal article" date="2006" name="Genome Res.">
        <title>Massive genome erosion and functional adaptations provide insights into the symbiotic lifestyle of Sodalis glossinidius in the tsetse host.</title>
        <authorList>
            <person name="Toh H."/>
            <person name="Weiss B.L."/>
            <person name="Perkin S.A.H."/>
            <person name="Yamashita A."/>
            <person name="Oshima K."/>
            <person name="Hattori M."/>
            <person name="Aksoy S."/>
        </authorList>
    </citation>
    <scope>NUCLEOTIDE SEQUENCE [LARGE SCALE GENOMIC DNA]</scope>
    <source>
        <strain>morsitans</strain>
    </source>
</reference>
<protein>
    <recommendedName>
        <fullName evidence="1">Probable Fe(2+)-trafficking protein</fullName>
    </recommendedName>
</protein>
<name>FETP_SODGM</name>
<proteinExistence type="inferred from homology"/>
<accession>Q2NRB4</accession>
<comment type="function">
    <text evidence="1">Could be a mediator in iron transactions between iron acquisition and iron-requiring processes, such as synthesis and/or repair of Fe-S clusters in biosynthetic enzymes.</text>
</comment>
<comment type="subunit">
    <text evidence="1">Monomer.</text>
</comment>
<comment type="similarity">
    <text evidence="1">Belongs to the Fe(2+)-trafficking protein family.</text>
</comment>
<dbReference type="EMBL" id="AP008232">
    <property type="protein sequence ID" value="BAE75311.1"/>
    <property type="molecule type" value="Genomic_DNA"/>
</dbReference>
<dbReference type="RefSeq" id="WP_011411766.1">
    <property type="nucleotide sequence ID" value="NC_007712.1"/>
</dbReference>
<dbReference type="SMR" id="Q2NRB4"/>
<dbReference type="STRING" id="343509.SG2036"/>
<dbReference type="KEGG" id="sgl:SG2036"/>
<dbReference type="eggNOG" id="COG2924">
    <property type="taxonomic scope" value="Bacteria"/>
</dbReference>
<dbReference type="HOGENOM" id="CLU_170994_0_0_6"/>
<dbReference type="OrthoDB" id="9804318at2"/>
<dbReference type="Proteomes" id="UP000001932">
    <property type="component" value="Chromosome"/>
</dbReference>
<dbReference type="GO" id="GO:0005829">
    <property type="term" value="C:cytosol"/>
    <property type="evidence" value="ECO:0007669"/>
    <property type="project" value="TreeGrafter"/>
</dbReference>
<dbReference type="GO" id="GO:0005506">
    <property type="term" value="F:iron ion binding"/>
    <property type="evidence" value="ECO:0007669"/>
    <property type="project" value="UniProtKB-UniRule"/>
</dbReference>
<dbReference type="GO" id="GO:0034599">
    <property type="term" value="P:cellular response to oxidative stress"/>
    <property type="evidence" value="ECO:0007669"/>
    <property type="project" value="TreeGrafter"/>
</dbReference>
<dbReference type="FunFam" id="1.10.3880.10:FF:000001">
    <property type="entry name" value="Probable Fe(2+)-trafficking protein"/>
    <property type="match status" value="1"/>
</dbReference>
<dbReference type="Gene3D" id="1.10.3880.10">
    <property type="entry name" value="Fe(II) trafficking protein YggX"/>
    <property type="match status" value="1"/>
</dbReference>
<dbReference type="HAMAP" id="MF_00686">
    <property type="entry name" value="Fe_traffic_YggX"/>
    <property type="match status" value="1"/>
</dbReference>
<dbReference type="InterPro" id="IPR007457">
    <property type="entry name" value="Fe_traffick_prot_YggX"/>
</dbReference>
<dbReference type="InterPro" id="IPR036766">
    <property type="entry name" value="Fe_traffick_prot_YggX_sf"/>
</dbReference>
<dbReference type="NCBIfam" id="NF003817">
    <property type="entry name" value="PRK05408.1"/>
    <property type="match status" value="1"/>
</dbReference>
<dbReference type="PANTHER" id="PTHR36965">
    <property type="entry name" value="FE(2+)-TRAFFICKING PROTEIN-RELATED"/>
    <property type="match status" value="1"/>
</dbReference>
<dbReference type="PANTHER" id="PTHR36965:SF1">
    <property type="entry name" value="FE(2+)-TRAFFICKING PROTEIN-RELATED"/>
    <property type="match status" value="1"/>
</dbReference>
<dbReference type="Pfam" id="PF04362">
    <property type="entry name" value="Iron_traffic"/>
    <property type="match status" value="1"/>
</dbReference>
<dbReference type="PIRSF" id="PIRSF029827">
    <property type="entry name" value="Fe_traffic_YggX"/>
    <property type="match status" value="1"/>
</dbReference>
<dbReference type="SUPFAM" id="SSF111148">
    <property type="entry name" value="YggX-like"/>
    <property type="match status" value="1"/>
</dbReference>
<evidence type="ECO:0000255" key="1">
    <source>
        <dbReference type="HAMAP-Rule" id="MF_00686"/>
    </source>
</evidence>